<gene>
    <name evidence="2" type="primary">prcB</name>
    <name type="ordered locus">Rv2110c</name>
</gene>
<keyword id="KW-0002">3D-structure</keyword>
<keyword id="KW-0068">Autocatalytic cleavage</keyword>
<keyword id="KW-0963">Cytoplasm</keyword>
<keyword id="KW-0903">Direct protein sequencing</keyword>
<keyword id="KW-0378">Hydrolase</keyword>
<keyword id="KW-0597">Phosphoprotein</keyword>
<keyword id="KW-0645">Protease</keyword>
<keyword id="KW-0647">Proteasome</keyword>
<keyword id="KW-1185">Reference proteome</keyword>
<keyword id="KW-0888">Threonine protease</keyword>
<keyword id="KW-0843">Virulence</keyword>
<keyword id="KW-0865">Zymogen</keyword>
<comment type="function">
    <text evidence="1 2 3 5 6 11">Component of the proteasome core, a large protease complex with broad specificity involved in protein degradation. The M.tuberculosis proteasome is able to cleave oligopeptides not only after hydrophobic but also after basic, acidic and small neutral residues (PubMed:16468985). In complex with the ATPase Mpa, degrades protein targets conjugated to a prokaryotic ubiquitin-like protein (Pup). Among the identified substrates of the M.tuberculosis proteasome are the pupylated FabD, PanB and Mpa proteins (PubMed:17082771). One function of the proteasome is to contribute to M.tuberculosis ability to resist killing by host macrophages, since the core proteasome is essential for persistence of the pathogen during the chronic phase of infection in mice (PubMed:18059281). Likely functions to recycle amino acids under nutrient starvation, thereby enabling the cell to maintain basal metabolic activities (By similarity) (PubMed:20711362). The mechanism of protection against bactericidal chemistries of the host's immune response probably involves the degradation of proteins that are irreversibly oxidized, nitrated, or nitrosated. A proteolysis-independent activity of the proteasome core is required for optimal growth of M.tuberculosis in mouse lungs and for RNI resistance; in contrast, long-term survival of M.tuberculosis in stationary phase and during starvation in vitro and in the chronic phase of mouse infection required a proteolytically active proteasome (PubMed:20711362).</text>
</comment>
<comment type="catalytic activity">
    <reaction evidence="2 3">
        <text>Cleavage of peptide bonds with very broad specificity.</text>
        <dbReference type="EC" id="3.4.25.1"/>
    </reaction>
</comment>
<comment type="activity regulation">
    <text evidence="2 3 7 10">The formation of the proteasomal ATPase ARC-20S proteasome complex, likely via the docking of the C-termini of ARC into the intersubunit pockets in the alpha-rings, may trigger opening of the gate for substrate entry. Interconversion between the open-gate and close-gate conformations leads to a dynamic regulation of the 20S proteasome proteolysis activity. In vitro, chymotryptic and tryptic activities of the proteasome are both completely inhibited by epoxomicin and by the peptidyl boronate inhibitor MLN-273. Also inhibited by Mg(2+), Ca(2+) and SDS. It was also shown that certain oxathiazol-2-one compounds can act as selective suicide-substrate inhibitors of the M.tuberculosis proteasome by irreversibly cyclocarbonylating its active site threonine. Proteasome activity is potently inhibited by fellutamide B (Ki=6.8 nM), a lipopeptide aldehyde that forms a reversible bond with the beta-OH of the active site threonine (PubMed:20558127).</text>
</comment>
<comment type="biophysicochemical properties">
    <kinetics>
        <KM evidence="3">56 uM for succinyl-LLVY-7-amino-4-methylcoumarin</KM>
        <Vmax evidence="3">0.24 nmol/min/mg enzyme with succinyl-LLVY-7-amino-4-methylcoumarin as substrate</Vmax>
    </kinetics>
</comment>
<comment type="pathway">
    <text evidence="2">Protein degradation; proteasomal Pup-dependent pathway.</text>
</comment>
<comment type="subunit">
    <text evidence="2 3 4 8 9">The 20S proteasome core is composed of 14 alpha and 14 beta subunits that assemble into four stacked heptameric rings, resulting in a barrel-shaped structure. The two inner rings, each composed of seven catalytic beta subunits, are sandwiched by two outer rings, each composed of seven alpha subunits. The catalytic chamber with the active sites is on the inside of the barrel. Has a gated structure, the ends of the cylinder being occluded by the N-termini of the alpha-subunits. Is capped by the proteasome-associated ATPase, ARC (Mpa).</text>
</comment>
<comment type="interaction">
    <interactant intactId="EBI-7947958">
        <id>P9WHT9</id>
    </interactant>
    <interactant intactId="EBI-7948002">
        <id>P9WHU1</id>
        <label>prcA</label>
    </interactant>
    <organismsDiffer>false</organismsDiffer>
    <experiments>6</experiments>
</comment>
<comment type="subcellular location">
    <subcellularLocation>
        <location evidence="2">Cytoplasm</location>
    </subcellularLocation>
</comment>
<comment type="domain">
    <text evidence="3">In contrast to Rhodococus, the M.tuberculosis proteasome does not require the propeptide of PrcB for correct folding and assembly.</text>
</comment>
<comment type="PTM">
    <text evidence="12">The unprocessed form of PrcB is phosphorylated by PknA. Processing of PrcB is greatly retarded in the presence of H(2)O(2).</text>
</comment>
<comment type="disruption phenotype">
    <text evidence="6 11">Cells lacking the core proteasome prcBA subunits exhibit reduced growth and persistence in mice. They are also attenuated in interferon-gamma-deficient mice. They also display increased sensitivity to reactive nitrogen intermediates (RNI) and increased resistance to oxidative stress.</text>
</comment>
<comment type="biotechnology">
    <text evidence="7">In the course of search for new antibiotics, a class of oxathiazol-2-one compounds has been identified that selectively inhibits the M.tuberculosis proteasome over the human proteasome and that kills non-replicating M.tuberculosis.</text>
</comment>
<comment type="similarity">
    <text evidence="2">Belongs to the peptidase T1B family.</text>
</comment>
<protein>
    <recommendedName>
        <fullName evidence="2">Proteasome subunit beta</fullName>
        <ecNumber evidence="2">3.4.25.1</ecNumber>
    </recommendedName>
    <alternativeName>
        <fullName evidence="2">20S proteasome beta subunit</fullName>
    </alternativeName>
    <alternativeName>
        <fullName evidence="2">Proteasome core protein PrcB</fullName>
    </alternativeName>
</protein>
<proteinExistence type="evidence at protein level"/>
<reference key="1">
    <citation type="journal article" date="1998" name="Nature">
        <title>Deciphering the biology of Mycobacterium tuberculosis from the complete genome sequence.</title>
        <authorList>
            <person name="Cole S.T."/>
            <person name="Brosch R."/>
            <person name="Parkhill J."/>
            <person name="Garnier T."/>
            <person name="Churcher C.M."/>
            <person name="Harris D.E."/>
            <person name="Gordon S.V."/>
            <person name="Eiglmeier K."/>
            <person name="Gas S."/>
            <person name="Barry C.E. III"/>
            <person name="Tekaia F."/>
            <person name="Badcock K."/>
            <person name="Basham D."/>
            <person name="Brown D."/>
            <person name="Chillingworth T."/>
            <person name="Connor R."/>
            <person name="Davies R.M."/>
            <person name="Devlin K."/>
            <person name="Feltwell T."/>
            <person name="Gentles S."/>
            <person name="Hamlin N."/>
            <person name="Holroyd S."/>
            <person name="Hornsby T."/>
            <person name="Jagels K."/>
            <person name="Krogh A."/>
            <person name="McLean J."/>
            <person name="Moule S."/>
            <person name="Murphy L.D."/>
            <person name="Oliver S."/>
            <person name="Osborne J."/>
            <person name="Quail M.A."/>
            <person name="Rajandream M.A."/>
            <person name="Rogers J."/>
            <person name="Rutter S."/>
            <person name="Seeger K."/>
            <person name="Skelton S."/>
            <person name="Squares S."/>
            <person name="Squares R."/>
            <person name="Sulston J.E."/>
            <person name="Taylor K."/>
            <person name="Whitehead S."/>
            <person name="Barrell B.G."/>
        </authorList>
    </citation>
    <scope>NUCLEOTIDE SEQUENCE [LARGE SCALE GENOMIC DNA]</scope>
    <source>
        <strain>ATCC 25618 / H37Rv</strain>
    </source>
</reference>
<reference key="2">
    <citation type="journal article" date="2006" name="Mol. Microbiol.">
        <title>Mycobacterium tuberculosis prcBA genes encode a gated proteasome with broad oligopeptide specificity.</title>
        <authorList>
            <person name="Lin G."/>
            <person name="Hu G."/>
            <person name="Tsu C."/>
            <person name="Kunes Y.Z."/>
            <person name="Li H."/>
            <person name="Dick L."/>
            <person name="Parsons T."/>
            <person name="Li P."/>
            <person name="Chen Z."/>
            <person name="Zwickl P."/>
            <person name="Weich N."/>
            <person name="Nathan C."/>
        </authorList>
    </citation>
    <scope>PROTEIN SEQUENCE OF N-TERMINUS</scope>
    <scope>FUNCTION</scope>
    <scope>CATALYTIC ACTIVITY</scope>
    <scope>SUBSTRATE SPECIFICITY</scope>
    <scope>SUBUNIT</scope>
    <scope>ACTIVITY REGULATION</scope>
    <scope>KINETIC PARAMETERS</scope>
    <scope>DOMAIN</scope>
    <source>
        <strain>ATCC 25618 / H37Rv</strain>
    </source>
</reference>
<reference key="3">
    <citation type="journal article" date="2006" name="EMBO J.">
        <title>Identification of substrates of the Mycobacterium tuberculosis proteasome.</title>
        <authorList>
            <person name="Pearce M.J."/>
            <person name="Arora P."/>
            <person name="Festa R.A."/>
            <person name="Butler-Wu S.M."/>
            <person name="Gokhale R.S."/>
            <person name="Darwin K.H."/>
        </authorList>
    </citation>
    <scope>PROTEIN SUBSTRATES</scope>
    <source>
        <strain>ATCC 25618 / H37Rv</strain>
    </source>
</reference>
<reference key="4">
    <citation type="journal article" date="2007" name="Nat. Med.">
        <title>In vivo gene silencing identifies the Mycobacterium tuberculosis proteasome as essential for the bacteria to persist in mice.</title>
        <authorList>
            <person name="Gandotra S."/>
            <person name="Schnappinger D."/>
            <person name="Monteleone M."/>
            <person name="Hillen W."/>
            <person name="Ehrt S."/>
        </authorList>
    </citation>
    <scope>ROLE IN VIRULENCE</scope>
    <scope>DISRUPTION PHENOTYPE</scope>
    <source>
        <strain>ATCC 25618 / H37Rv</strain>
    </source>
</reference>
<reference key="5">
    <citation type="journal article" date="2011" name="Mol. Cell. Proteomics">
        <title>Proteogenomic analysis of Mycobacterium tuberculosis by high resolution mass spectrometry.</title>
        <authorList>
            <person name="Kelkar D.S."/>
            <person name="Kumar D."/>
            <person name="Kumar P."/>
            <person name="Balakrishnan L."/>
            <person name="Muthusamy B."/>
            <person name="Yadav A.K."/>
            <person name="Shrivastava P."/>
            <person name="Marimuthu A."/>
            <person name="Anand S."/>
            <person name="Sundaram H."/>
            <person name="Kingsbury R."/>
            <person name="Harsha H.C."/>
            <person name="Nair B."/>
            <person name="Prasad T.S."/>
            <person name="Chauhan D.S."/>
            <person name="Katoch K."/>
            <person name="Katoch V.M."/>
            <person name="Kumar P."/>
            <person name="Chaerkady R."/>
            <person name="Ramachandran S."/>
            <person name="Dash D."/>
            <person name="Pandey A."/>
        </authorList>
    </citation>
    <scope>IDENTIFICATION BY MASS SPECTROMETRY [LARGE SCALE ANALYSIS]</scope>
    <source>
        <strain>ATCC 25618 / H37Rv</strain>
    </source>
</reference>
<reference key="6">
    <citation type="journal article" date="2010" name="FEBS Lett.">
        <title>Stoichiometric protein complex formation and over-expression using the prokaryotic native operon structure.</title>
        <authorList>
            <person name="Poulsen C."/>
            <person name="Holton S."/>
            <person name="Geerlof A."/>
            <person name="Wilmanns M."/>
            <person name="Song Y.H."/>
        </authorList>
    </citation>
    <scope>ELECTRON MICROSCOPY</scope>
    <scope>SUBUNIT</scope>
    <source>
        <strain>ATCC 25618 / H37Rv</strain>
    </source>
</reference>
<reference key="7">
    <citation type="journal article" date="2010" name="PLoS Pathog.">
        <title>The Mycobacterium tuberculosis proteasome active site threonine is essential for persistence yet dispensable for replication and resistance to nitric oxide.</title>
        <authorList>
            <person name="Gandotra S."/>
            <person name="Lebron M.B."/>
            <person name="Ehrt S."/>
        </authorList>
    </citation>
    <scope>ROLE IN PERSISTENCE</scope>
    <scope>DISRUPTION PHENOTYPE</scope>
    <scope>ACTIVE SITE</scope>
    <scope>MUTAGENESIS OF THR-58</scope>
    <source>
        <strain>H37Rv</strain>
    </source>
</reference>
<reference key="8">
    <citation type="journal article" date="2014" name="J. Microbiol.">
        <title>Phosphorylation regulates mycobacterial proteasome.</title>
        <authorList>
            <person name="Anandan T."/>
            <person name="Han J."/>
            <person name="Baun H."/>
            <person name="Nyayapathy S."/>
            <person name="Brown J.T."/>
            <person name="Dial R.L."/>
            <person name="Moltalvo J.A."/>
            <person name="Kim M.S."/>
            <person name="Yang S.H."/>
            <person name="Ronning D.R."/>
            <person name="Husson R.N."/>
            <person name="Suh J."/>
            <person name="Kang C.M."/>
        </authorList>
    </citation>
    <scope>PHOSPHORYLATION</scope>
    <scope>PROCESSING</scope>
    <source>
        <strain>H37Rv</strain>
    </source>
</reference>
<reference key="9">
    <citation type="journal article" date="2006" name="Mol. Microbiol.">
        <title>Structure of the Mycobacterium tuberculosis proteasome and mechanism of inhibition by a peptidyl boronate.</title>
        <authorList>
            <person name="Hu G."/>
            <person name="Lin G."/>
            <person name="Wang M."/>
            <person name="Dick L."/>
            <person name="Xu R.-M."/>
            <person name="Nathan C."/>
            <person name="Li H."/>
        </authorList>
    </citation>
    <scope>X-RAY CRYSTALLOGRAPHY (2.99 ANGSTROMS) OF 58-291 IN COMPLEXES WITH THE ALPHA SUBUNIT AND WITH THE MLN-273 INHIBITOR</scope>
    <scope>SUBUNIT</scope>
    <source>
        <strain>ATCC 25618 / H37Rv</strain>
    </source>
</reference>
<reference key="10">
    <citation type="journal article" date="2009" name="Nature">
        <title>Inhibitors selective for mycobacterial versus human proteasomes.</title>
        <authorList>
            <person name="Lin G."/>
            <person name="Li D."/>
            <person name="de Carvalho L.P."/>
            <person name="Deng H."/>
            <person name="Tao H."/>
            <person name="Vogt G."/>
            <person name="Wu K."/>
            <person name="Schneider J."/>
            <person name="Chidawanyika T."/>
            <person name="Warren J.D."/>
            <person name="Li H."/>
            <person name="Nathan C."/>
        </authorList>
    </citation>
    <scope>X-RAY CRYSTALLOGRAPHY (2.43 ANGSTROMS) IN COMPLEXES WITH WILD-TYPE AND OPEN-GATE ALPHA SUBUNIT MUTANT; INHIBITOR HT1171 AND INHIBITOR GL1</scope>
    <scope>ACTIVITY REGULATION</scope>
    <scope>BIOTECHNOLOGY</scope>
    <source>
        <strain>ATCC 25618 / H37Rv</strain>
    </source>
</reference>
<reference key="11">
    <citation type="journal article" date="2010" name="Arch. Biochem. Biophys.">
        <title>Fellutamide B is a potent inhibitor of the Mycobacterium tuberculosis proteasome.</title>
        <authorList>
            <person name="Lin G."/>
            <person name="Li D."/>
            <person name="Chidawanyika T."/>
            <person name="Nathan C."/>
            <person name="Li H."/>
        </authorList>
    </citation>
    <scope>X-RAY CRYSTALLOGRAPHY (2.50 ANGSTROMS) OF 58-291 IN COMPLEX WITH ALPHA SUBUNIT AND FELLUTAMIDE B INHIBITOR</scope>
    <scope>ACTIVITY REGULATION</scope>
</reference>
<reference key="12">
    <citation type="journal article" date="2010" name="EMBO J.">
        <title>Structural basis for the assembly and gate closure mechanisms of the Mycobacterium tuberculosis 20S proteasome.</title>
        <authorList>
            <person name="Li D."/>
            <person name="Li H."/>
            <person name="Wang T."/>
            <person name="Pan H."/>
            <person name="Lin G."/>
            <person name="Li H."/>
        </authorList>
    </citation>
    <scope>X-RAY CRYSTALLOGRAPHY (2.20 ANGSTROMS) OF WILD-TYPE AND MUTANT ALA-58 IN COMPLEX WITH WILD-TYPE AND OPEN-GATE ALPHA SUBUNIT MUTANT</scope>
    <scope>SUBUNIT</scope>
    <scope>GATED STRUCTURE</scope>
    <scope>PROTEASOME ASSEMBLY PROCESS</scope>
    <source>
        <strain>ATCC 25618 / H37Rv</strain>
    </source>
</reference>
<organism>
    <name type="scientific">Mycobacterium tuberculosis (strain ATCC 25618 / H37Rv)</name>
    <dbReference type="NCBI Taxonomy" id="83332"/>
    <lineage>
        <taxon>Bacteria</taxon>
        <taxon>Bacillati</taxon>
        <taxon>Actinomycetota</taxon>
        <taxon>Actinomycetes</taxon>
        <taxon>Mycobacteriales</taxon>
        <taxon>Mycobacteriaceae</taxon>
        <taxon>Mycobacterium</taxon>
        <taxon>Mycobacterium tuberculosis complex</taxon>
    </lineage>
</organism>
<accession>P9WHT9</accession>
<accession>L0T8V8</accession>
<accession>O33245</accession>
<accession>Q7D7I2</accession>
<dbReference type="EC" id="3.4.25.1" evidence="2"/>
<dbReference type="EMBL" id="AL123456">
    <property type="protein sequence ID" value="CCP44885.1"/>
    <property type="molecule type" value="Genomic_DNA"/>
</dbReference>
<dbReference type="PIR" id="A70512">
    <property type="entry name" value="A70512"/>
</dbReference>
<dbReference type="RefSeq" id="NP_216626.1">
    <property type="nucleotide sequence ID" value="NC_000962.3"/>
</dbReference>
<dbReference type="RefSeq" id="WP_003411023.1">
    <property type="nucleotide sequence ID" value="NZ_NVQJ01000058.1"/>
</dbReference>
<dbReference type="PDB" id="2FHG">
    <property type="method" value="X-ray"/>
    <property type="resolution" value="3.23 A"/>
    <property type="chains" value="2/C/E/G/H/J/L/N/P/R/T/V/X/Z=58-291"/>
</dbReference>
<dbReference type="PDB" id="2FHH">
    <property type="method" value="X-ray"/>
    <property type="resolution" value="2.99 A"/>
    <property type="chains" value="2/C/E/G/H/J/L/N/P/R/T/V/X/Z=58-291"/>
</dbReference>
<dbReference type="PDB" id="2JAY">
    <property type="method" value="X-ray"/>
    <property type="resolution" value="1.99 A"/>
    <property type="chains" value="A=1-291"/>
</dbReference>
<dbReference type="PDB" id="3H6F">
    <property type="method" value="X-ray"/>
    <property type="resolution" value="2.51 A"/>
    <property type="chains" value="2/C/E/G/H/J/L/N/P/R/T/V/X/Z=59-291"/>
</dbReference>
<dbReference type="PDB" id="3H6I">
    <property type="method" value="X-ray"/>
    <property type="resolution" value="2.43 A"/>
    <property type="chains" value="2/C/E/G/H/J/L/N/P/R/T/V/X/Z=59-291"/>
</dbReference>
<dbReference type="PDB" id="3HF9">
    <property type="method" value="X-ray"/>
    <property type="resolution" value="2.88 A"/>
    <property type="chains" value="2/4/C/E/G/H/J/L/N/P/R/T/V/X/Z/c/e/g/h/j/l/n/p/r/t/v/x/z=59-291"/>
</dbReference>
<dbReference type="PDB" id="3HFA">
    <property type="method" value="X-ray"/>
    <property type="resolution" value="2.50 A"/>
    <property type="chains" value="2/C/E/G/H/J/L/N/P/R/T/V/X/Z=58-291"/>
</dbReference>
<dbReference type="PDB" id="3KRD">
    <property type="method" value="X-ray"/>
    <property type="resolution" value="2.50 A"/>
    <property type="chains" value="2/C/E/G/H/J/L/N/P/R/T/V/X/Z=58-291"/>
</dbReference>
<dbReference type="PDB" id="3MFE">
    <property type="method" value="X-ray"/>
    <property type="resolution" value="2.60 A"/>
    <property type="chains" value="2/C/E/H/J/L/N/P/R/T/X/Z=59-291, G/V=58-291"/>
</dbReference>
<dbReference type="PDB" id="3MI0">
    <property type="method" value="X-ray"/>
    <property type="resolution" value="2.20 A"/>
    <property type="chains" value="2/C/E/G/H/J/L/N/P/R/T/V/X/Z=58-291"/>
</dbReference>
<dbReference type="PDB" id="3MKA">
    <property type="method" value="X-ray"/>
    <property type="resolution" value="2.51 A"/>
    <property type="chains" value="2/C/E/G/H/J/L/N/P/R/T/V/X/Z=1-291"/>
</dbReference>
<dbReference type="PDB" id="5LZP">
    <property type="method" value="EM"/>
    <property type="resolution" value="3.45 A"/>
    <property type="chains" value="A/C/E/F/G/I/K/L/N/O/P/R/T/U=59-291"/>
</dbReference>
<dbReference type="PDB" id="5THO">
    <property type="method" value="X-ray"/>
    <property type="resolution" value="3.00 A"/>
    <property type="chains" value="H/I/J/K/L/M/N/V/W/X/Y/Z/a/b=58-291"/>
</dbReference>
<dbReference type="PDB" id="5TRG">
    <property type="method" value="X-ray"/>
    <property type="resolution" value="2.80 A"/>
    <property type="chains" value="H/I/J/K/L/M/N/V/W/X/Y/Z/a/b=58-291"/>
</dbReference>
<dbReference type="PDB" id="5TRR">
    <property type="method" value="X-ray"/>
    <property type="resolution" value="3.10 A"/>
    <property type="chains" value="H/I/J/K/L/M/N/V/W/X/Y/Z/a/b=58-291"/>
</dbReference>
<dbReference type="PDB" id="5TRS">
    <property type="method" value="X-ray"/>
    <property type="resolution" value="3.08 A"/>
    <property type="chains" value="H/I/J/K/L/M/N/V/W/X/Y/Z/a/b=58-291"/>
</dbReference>
<dbReference type="PDB" id="5TRY">
    <property type="method" value="X-ray"/>
    <property type="resolution" value="3.00 A"/>
    <property type="chains" value="H/I/J/K/L/M/N/V/W/X/Y/Z/a/b=58-291"/>
</dbReference>
<dbReference type="PDB" id="5TS0">
    <property type="method" value="X-ray"/>
    <property type="resolution" value="2.85 A"/>
    <property type="chains" value="H/I/J/K/L/M/N/V/W/X/Y/Z/a/b=58-291"/>
</dbReference>
<dbReference type="PDB" id="6BGL">
    <property type="method" value="EM"/>
    <property type="resolution" value="3.40 A"/>
    <property type="chains" value="P/Q/R/S/T/U/V/W/X/Y/Z/a/b/c=58-291"/>
</dbReference>
<dbReference type="PDB" id="6BGO">
    <property type="method" value="EM"/>
    <property type="resolution" value="4.20 A"/>
    <property type="chains" value="P/Q/R/S/T/U/V/W/X/Y/Z/a/b/c=58-291"/>
</dbReference>
<dbReference type="PDB" id="6OCW">
    <property type="method" value="X-ray"/>
    <property type="resolution" value="2.60 A"/>
    <property type="chains" value="H/I/J/K/L/M/N/V/W/X/Y/Z/a/b=58-291"/>
</dbReference>
<dbReference type="PDB" id="6OCZ">
    <property type="method" value="X-ray"/>
    <property type="resolution" value="2.65 A"/>
    <property type="chains" value="H/I/J/K/L/M/N/V/W/X/Y/Z/a/b=58-291"/>
</dbReference>
<dbReference type="PDB" id="6ODE">
    <property type="method" value="X-ray"/>
    <property type="resolution" value="2.90 A"/>
    <property type="chains" value="H/I/J/K/L/M/N/V/W/X/Y/Z/a/b=58-291"/>
</dbReference>
<dbReference type="PDB" id="6WNK">
    <property type="method" value="X-ray"/>
    <property type="resolution" value="2.28 A"/>
    <property type="chains" value="H/I/J/K/L/M/N/V/W/X/Y/Z/a/b=58-291"/>
</dbReference>
<dbReference type="PDB" id="7PXA">
    <property type="method" value="EM"/>
    <property type="resolution" value="2.80 A"/>
    <property type="chains" value="H/J/L/M/N/P/R/S/U/V/W/Y/a/b=1-291"/>
</dbReference>
<dbReference type="PDB" id="7PXC">
    <property type="method" value="EM"/>
    <property type="resolution" value="3.84 A"/>
    <property type="chains" value="H/J/L/M/N/P/R/S/U/V/W/Y/a/b=1-291"/>
</dbReference>
<dbReference type="PDB" id="7PXD">
    <property type="method" value="EM"/>
    <property type="resolution" value="4.00 A"/>
    <property type="chains" value="H/J/L/M/N/P/R/S/U/V/W/Y/a/b=1-291"/>
</dbReference>
<dbReference type="PDB" id="8D6V">
    <property type="method" value="EM"/>
    <property type="resolution" value="3.20 A"/>
    <property type="chains" value="P/Q/R/S/T/U/V/W/X/Y/Z/a/b/c=1-291"/>
</dbReference>
<dbReference type="PDB" id="8D6W">
    <property type="method" value="EM"/>
    <property type="resolution" value="3.00 A"/>
    <property type="chains" value="P/Q/R/S/T/U/V/W/X/Y/Z/a/b/c=1-291"/>
</dbReference>
<dbReference type="PDB" id="8D6X">
    <property type="method" value="EM"/>
    <property type="resolution" value="3.20 A"/>
    <property type="chains" value="P/Q/R/S/T/U/V/W/X/Y/Z/a/b/c=1-291"/>
</dbReference>
<dbReference type="PDB" id="8D6Y">
    <property type="method" value="EM"/>
    <property type="resolution" value="10.00 A"/>
    <property type="chains" value="P/Q/R/S/T/U/V/W/X/Y/Z/a/b/c=1-291"/>
</dbReference>
<dbReference type="PDB" id="9CE5">
    <property type="method" value="EM"/>
    <property type="resolution" value="2.66 A"/>
    <property type="chains" value="O/P/Q/R/S/T/U/V/W/X/Y/Z/a/b=58-291"/>
</dbReference>
<dbReference type="PDB" id="9CE7">
    <property type="method" value="EM"/>
    <property type="resolution" value="2.72 A"/>
    <property type="chains" value="O/P/Q/R/S/T/U/V/W/X/Y/Z/a/b=58-291"/>
</dbReference>
<dbReference type="PDB" id="9CE8">
    <property type="method" value="EM"/>
    <property type="resolution" value="2.61 A"/>
    <property type="chains" value="O/P/Q/R/S/T/U/V/W/X/Y/Z/a/b=58-291"/>
</dbReference>
<dbReference type="PDB" id="9CEB">
    <property type="method" value="EM"/>
    <property type="resolution" value="2.50 A"/>
    <property type="chains" value="O/P/Q/R/S/T/U/V/W/X/Y/Z/a/b=58-291"/>
</dbReference>
<dbReference type="PDB" id="9CEE">
    <property type="method" value="EM"/>
    <property type="resolution" value="2.89 A"/>
    <property type="chains" value="O/P/Q/R/S/T/U/V/W/X/Y/Z/a/b=58-291"/>
</dbReference>
<dbReference type="PDB" id="9CEG">
    <property type="method" value="EM"/>
    <property type="resolution" value="2.86 A"/>
    <property type="chains" value="O/P/Q/R/S/T/U/V/W/X/Y/Z/a/b=58-291"/>
</dbReference>
<dbReference type="PDBsum" id="2FHG"/>
<dbReference type="PDBsum" id="2FHH"/>
<dbReference type="PDBsum" id="2JAY"/>
<dbReference type="PDBsum" id="3H6F"/>
<dbReference type="PDBsum" id="3H6I"/>
<dbReference type="PDBsum" id="3HF9"/>
<dbReference type="PDBsum" id="3HFA"/>
<dbReference type="PDBsum" id="3KRD"/>
<dbReference type="PDBsum" id="3MFE"/>
<dbReference type="PDBsum" id="3MI0"/>
<dbReference type="PDBsum" id="3MKA"/>
<dbReference type="PDBsum" id="5LZP"/>
<dbReference type="PDBsum" id="5THO"/>
<dbReference type="PDBsum" id="5TRG"/>
<dbReference type="PDBsum" id="5TRR"/>
<dbReference type="PDBsum" id="5TRS"/>
<dbReference type="PDBsum" id="5TRY"/>
<dbReference type="PDBsum" id="5TS0"/>
<dbReference type="PDBsum" id="6BGL"/>
<dbReference type="PDBsum" id="6BGO"/>
<dbReference type="PDBsum" id="6OCW"/>
<dbReference type="PDBsum" id="6OCZ"/>
<dbReference type="PDBsum" id="6ODE"/>
<dbReference type="PDBsum" id="6WNK"/>
<dbReference type="PDBsum" id="7PXA"/>
<dbReference type="PDBsum" id="7PXC"/>
<dbReference type="PDBsum" id="7PXD"/>
<dbReference type="PDBsum" id="8D6V"/>
<dbReference type="PDBsum" id="8D6W"/>
<dbReference type="PDBsum" id="8D6X"/>
<dbReference type="PDBsum" id="8D6Y"/>
<dbReference type="PDBsum" id="9CE5"/>
<dbReference type="PDBsum" id="9CE7"/>
<dbReference type="PDBsum" id="9CE8"/>
<dbReference type="PDBsum" id="9CEB"/>
<dbReference type="PDBsum" id="9CEE"/>
<dbReference type="PDBsum" id="9CEG"/>
<dbReference type="EMDB" id="EMD-13697"/>
<dbReference type="EMDB" id="EMD-4128"/>
<dbReference type="EMDB" id="EMD-45494"/>
<dbReference type="EMDB" id="EMD-45495"/>
<dbReference type="EMDB" id="EMD-45496"/>
<dbReference type="EMDB" id="EMD-45498"/>
<dbReference type="EMDB" id="EMD-45499"/>
<dbReference type="EMDB" id="EMD-45501"/>
<dbReference type="EMDB" id="EMD-45532"/>
<dbReference type="EMDB" id="EMD-45534"/>
<dbReference type="EMDB" id="EMD-45535"/>
<dbReference type="EMDB" id="EMD-45537"/>
<dbReference type="EMDB" id="EMD-45538"/>
<dbReference type="EMDB" id="EMD-45539"/>
<dbReference type="EMDB" id="EMD-45540"/>
<dbReference type="EMDB" id="EMD-45541"/>
<dbReference type="EMDB" id="EMD-45542"/>
<dbReference type="EMDB" id="EMD-45547"/>
<dbReference type="EMDB" id="EMD-45552"/>
<dbReference type="EMDB" id="EMD-45553"/>
<dbReference type="EMDB" id="EMD-45556"/>
<dbReference type="EMDB" id="EMD-45558"/>
<dbReference type="EMDB" id="EMD-45559"/>
<dbReference type="EMDB" id="EMD-45560"/>
<dbReference type="EMDB" id="EMD-45561"/>
<dbReference type="EMDB" id="EMD-45562"/>
<dbReference type="SMR" id="P9WHT9"/>
<dbReference type="FunCoup" id="P9WHT9">
    <property type="interactions" value="303"/>
</dbReference>
<dbReference type="IntAct" id="P9WHT9">
    <property type="interactions" value="7"/>
</dbReference>
<dbReference type="MINT" id="P9WHT9"/>
<dbReference type="STRING" id="83332.Rv2110c"/>
<dbReference type="DrugBank" id="DB04732">
    <property type="generic name" value="N-(4-MORPHOLINE)CARBONYL-B-(1-NAPHTHYL)-L-ALANINE-L-LEUCINE BORONIC ACID"/>
</dbReference>
<dbReference type="PaxDb" id="83332-Rv2110c"/>
<dbReference type="DNASU" id="887508"/>
<dbReference type="GeneID" id="887508"/>
<dbReference type="KEGG" id="mtu:Rv2110c"/>
<dbReference type="KEGG" id="mtv:RVBD_2110c"/>
<dbReference type="TubercuList" id="Rv2110c"/>
<dbReference type="eggNOG" id="COG0638">
    <property type="taxonomic scope" value="Bacteria"/>
</dbReference>
<dbReference type="InParanoid" id="P9WHT9"/>
<dbReference type="OrthoDB" id="5174038at2"/>
<dbReference type="PhylomeDB" id="P9WHT9"/>
<dbReference type="UniPathway" id="UPA00997"/>
<dbReference type="EvolutionaryTrace" id="P9WHT9"/>
<dbReference type="Proteomes" id="UP000001584">
    <property type="component" value="Chromosome"/>
</dbReference>
<dbReference type="GO" id="GO:0005737">
    <property type="term" value="C:cytoplasm"/>
    <property type="evidence" value="ECO:0007669"/>
    <property type="project" value="UniProtKB-SubCell"/>
</dbReference>
<dbReference type="GO" id="GO:0005576">
    <property type="term" value="C:extracellular region"/>
    <property type="evidence" value="ECO:0000314"/>
    <property type="project" value="CAFA"/>
</dbReference>
<dbReference type="GO" id="GO:0005886">
    <property type="term" value="C:plasma membrane"/>
    <property type="evidence" value="ECO:0007005"/>
    <property type="project" value="MTBBASE"/>
</dbReference>
<dbReference type="GO" id="GO:0019774">
    <property type="term" value="C:proteasome core complex, beta-subunit complex"/>
    <property type="evidence" value="ECO:0000314"/>
    <property type="project" value="UniProtKB"/>
</dbReference>
<dbReference type="GO" id="GO:0004298">
    <property type="term" value="F:threonine-type endopeptidase activity"/>
    <property type="evidence" value="ECO:0000314"/>
    <property type="project" value="UniProtKB"/>
</dbReference>
<dbReference type="GO" id="GO:0035375">
    <property type="term" value="F:zymogen binding"/>
    <property type="evidence" value="ECO:0000353"/>
    <property type="project" value="CAFA"/>
</dbReference>
<dbReference type="GO" id="GO:0019941">
    <property type="term" value="P:modification-dependent protein catabolic process"/>
    <property type="evidence" value="ECO:0000314"/>
    <property type="project" value="UniProtKB"/>
</dbReference>
<dbReference type="GO" id="GO:0010498">
    <property type="term" value="P:proteasomal protein catabolic process"/>
    <property type="evidence" value="ECO:0000314"/>
    <property type="project" value="UniProtKB"/>
</dbReference>
<dbReference type="GO" id="GO:0043161">
    <property type="term" value="P:proteasome-mediated ubiquitin-dependent protein catabolic process"/>
    <property type="evidence" value="ECO:0000318"/>
    <property type="project" value="GO_Central"/>
</dbReference>
<dbReference type="GO" id="GO:0051603">
    <property type="term" value="P:proteolysis involved in protein catabolic process"/>
    <property type="evidence" value="ECO:0000314"/>
    <property type="project" value="MTBBASE"/>
</dbReference>
<dbReference type="GO" id="GO:0030682">
    <property type="term" value="P:symbiont-mediated perturbation of host defenses"/>
    <property type="evidence" value="ECO:0000315"/>
    <property type="project" value="UniProtKB"/>
</dbReference>
<dbReference type="CDD" id="cd01906">
    <property type="entry name" value="proteasome_protease_HslV"/>
    <property type="match status" value="1"/>
</dbReference>
<dbReference type="FunFam" id="3.60.20.10:FF:000046">
    <property type="entry name" value="Proteasome subunit beta"/>
    <property type="match status" value="1"/>
</dbReference>
<dbReference type="Gene3D" id="3.60.20.10">
    <property type="entry name" value="Glutamine Phosphoribosylpyrophosphate, subunit 1, domain 1"/>
    <property type="match status" value="1"/>
</dbReference>
<dbReference type="HAMAP" id="MF_02113_B">
    <property type="entry name" value="Proteasome_B_B"/>
    <property type="match status" value="1"/>
</dbReference>
<dbReference type="InterPro" id="IPR029055">
    <property type="entry name" value="Ntn_hydrolases_N"/>
</dbReference>
<dbReference type="InterPro" id="IPR001353">
    <property type="entry name" value="Proteasome_sua/b"/>
</dbReference>
<dbReference type="InterPro" id="IPR023333">
    <property type="entry name" value="Proteasome_suB-type"/>
</dbReference>
<dbReference type="InterPro" id="IPR022483">
    <property type="entry name" value="PSB_actinobac"/>
</dbReference>
<dbReference type="NCBIfam" id="TIGR03690">
    <property type="entry name" value="20S_bact_beta"/>
    <property type="match status" value="1"/>
</dbReference>
<dbReference type="PANTHER" id="PTHR32194:SF0">
    <property type="entry name" value="ATP-DEPENDENT PROTEASE SUBUNIT HSLV"/>
    <property type="match status" value="1"/>
</dbReference>
<dbReference type="PANTHER" id="PTHR32194">
    <property type="entry name" value="METALLOPROTEASE TLDD"/>
    <property type="match status" value="1"/>
</dbReference>
<dbReference type="Pfam" id="PF00227">
    <property type="entry name" value="Proteasome"/>
    <property type="match status" value="1"/>
</dbReference>
<dbReference type="SUPFAM" id="SSF56235">
    <property type="entry name" value="N-terminal nucleophile aminohydrolases (Ntn hydrolases)"/>
    <property type="match status" value="1"/>
</dbReference>
<dbReference type="PROSITE" id="PS51476">
    <property type="entry name" value="PROTEASOME_BETA_2"/>
    <property type="match status" value="1"/>
</dbReference>
<sequence>MTWPLPDRLSINSLSGTPAVDLSSFTDFLRRQAPELLPASISGGAPLAGGDAQLPHGTTIVALKYPGGVVMAGDRRSTQGNMISGRDVRKVYITDDYTATGIAGTAAVAVEFARLYAVELEHYEKLEGVPLTFAGKINRLAIMVRGNLAAAMQGLLALPLLAGYDIHASDPQSAGRIVSFDAAGGWNIEEEGYQAVGSGSLFAKSSMKKLYSQVTDGDSGLRVAVEALYDAADDDSATGGPDLVRGIFPTAVIIDADGAVDVPESRIAELARAIIESRSGADTFGSDGGEK</sequence>
<name>PSB_MYCTU</name>
<evidence type="ECO:0000250" key="1">
    <source>
        <dbReference type="UniProtKB" id="A0QZ47"/>
    </source>
</evidence>
<evidence type="ECO:0000255" key="2">
    <source>
        <dbReference type="HAMAP-Rule" id="MF_02113"/>
    </source>
</evidence>
<evidence type="ECO:0000269" key="3">
    <source>
    </source>
</evidence>
<evidence type="ECO:0000269" key="4">
    <source>
    </source>
</evidence>
<evidence type="ECO:0000269" key="5">
    <source>
    </source>
</evidence>
<evidence type="ECO:0000269" key="6">
    <source>
    </source>
</evidence>
<evidence type="ECO:0000269" key="7">
    <source>
    </source>
</evidence>
<evidence type="ECO:0000269" key="8">
    <source>
    </source>
</evidence>
<evidence type="ECO:0000269" key="9">
    <source>
    </source>
</evidence>
<evidence type="ECO:0000269" key="10">
    <source>
    </source>
</evidence>
<evidence type="ECO:0000269" key="11">
    <source>
    </source>
</evidence>
<evidence type="ECO:0000269" key="12">
    <source>
    </source>
</evidence>
<evidence type="ECO:0000305" key="13">
    <source>
    </source>
</evidence>
<evidence type="ECO:0007829" key="14">
    <source>
        <dbReference type="PDB" id="2FHH"/>
    </source>
</evidence>
<evidence type="ECO:0007829" key="15">
    <source>
        <dbReference type="PDB" id="2JAY"/>
    </source>
</evidence>
<evidence type="ECO:0007829" key="16">
    <source>
        <dbReference type="PDB" id="3MI0"/>
    </source>
</evidence>
<evidence type="ECO:0007829" key="17">
    <source>
        <dbReference type="PDB" id="3MKA"/>
    </source>
</evidence>
<evidence type="ECO:0007829" key="18">
    <source>
        <dbReference type="PDB" id="5LZP"/>
    </source>
</evidence>
<evidence type="ECO:0007829" key="19">
    <source>
        <dbReference type="PDB" id="7PXA"/>
    </source>
</evidence>
<feature type="propeptide" id="PRO_0000383485" description="Removed in mature form; by autocatalysis" evidence="2 3">
    <location>
        <begin position="1"/>
        <end position="57"/>
    </location>
</feature>
<feature type="chain" id="PRO_0000383486" description="Proteasome subunit beta">
    <location>
        <begin position="58"/>
        <end position="291"/>
    </location>
</feature>
<feature type="active site" description="Nucleophile" evidence="13">
    <location>
        <position position="58"/>
    </location>
</feature>
<feature type="site" description="Covalent link with the inhibitor MLN-273" evidence="4">
    <location>
        <position position="58"/>
    </location>
</feature>
<feature type="mutagenesis site" description="Loss of proteasome proteolytic activity. This mutant enables optimal growth in vitro and in vivo, confers RNI resistance but is not sufficient for persistence in mice." evidence="11">
    <original>T</original>
    <variation>A</variation>
    <location>
        <position position="58"/>
    </location>
</feature>
<feature type="helix" evidence="17">
    <location>
        <begin position="25"/>
        <end position="32"/>
    </location>
</feature>
<feature type="helix" evidence="17">
    <location>
        <begin position="34"/>
        <end position="36"/>
    </location>
</feature>
<feature type="strand" evidence="15">
    <location>
        <begin position="60"/>
        <end position="65"/>
    </location>
</feature>
<feature type="strand" evidence="15">
    <location>
        <begin position="68"/>
        <end position="73"/>
    </location>
</feature>
<feature type="strand" evidence="16">
    <location>
        <begin position="77"/>
        <end position="79"/>
    </location>
</feature>
<feature type="strand" evidence="16">
    <location>
        <begin position="82"/>
        <end position="86"/>
    </location>
</feature>
<feature type="strand" evidence="15">
    <location>
        <begin position="91"/>
        <end position="95"/>
    </location>
</feature>
<feature type="strand" evidence="15">
    <location>
        <begin position="98"/>
        <end position="104"/>
    </location>
</feature>
<feature type="helix" evidence="15">
    <location>
        <begin position="106"/>
        <end position="127"/>
    </location>
</feature>
<feature type="helix" evidence="15">
    <location>
        <begin position="133"/>
        <end position="145"/>
    </location>
</feature>
<feature type="helix" evidence="15">
    <location>
        <begin position="148"/>
        <end position="153"/>
    </location>
</feature>
<feature type="strand" evidence="15">
    <location>
        <begin position="158"/>
        <end position="164"/>
    </location>
</feature>
<feature type="helix" evidence="16">
    <location>
        <begin position="171"/>
        <end position="173"/>
    </location>
</feature>
<feature type="strand" evidence="15">
    <location>
        <begin position="175"/>
        <end position="180"/>
    </location>
</feature>
<feature type="strand" evidence="18">
    <location>
        <begin position="182"/>
        <end position="184"/>
    </location>
</feature>
<feature type="strand" evidence="15">
    <location>
        <begin position="186"/>
        <end position="188"/>
    </location>
</feature>
<feature type="strand" evidence="15">
    <location>
        <begin position="190"/>
        <end position="197"/>
    </location>
</feature>
<feature type="helix" evidence="15">
    <location>
        <begin position="200"/>
        <end position="210"/>
    </location>
</feature>
<feature type="helix" evidence="15">
    <location>
        <begin position="211"/>
        <end position="213"/>
    </location>
</feature>
<feature type="helix" evidence="15">
    <location>
        <begin position="217"/>
        <end position="230"/>
    </location>
</feature>
<feature type="turn" evidence="14">
    <location>
        <begin position="236"/>
        <end position="238"/>
    </location>
</feature>
<feature type="turn" evidence="16">
    <location>
        <begin position="243"/>
        <end position="246"/>
    </location>
</feature>
<feature type="strand" evidence="15">
    <location>
        <begin position="250"/>
        <end position="255"/>
    </location>
</feature>
<feature type="strand" evidence="15">
    <location>
        <begin position="258"/>
        <end position="261"/>
    </location>
</feature>
<feature type="helix" evidence="15">
    <location>
        <begin position="264"/>
        <end position="273"/>
    </location>
</feature>
<feature type="helix" evidence="16">
    <location>
        <begin position="281"/>
        <end position="284"/>
    </location>
</feature>
<feature type="strand" evidence="19">
    <location>
        <begin position="287"/>
        <end position="289"/>
    </location>
</feature>